<comment type="function">
    <text evidence="1">Involved in the gluconeogenesis. Catalyzes stereospecifically the conversion of dihydroxyacetone phosphate (DHAP) to D-glyceraldehyde-3-phosphate (G3P).</text>
</comment>
<comment type="catalytic activity">
    <reaction evidence="1">
        <text>D-glyceraldehyde 3-phosphate = dihydroxyacetone phosphate</text>
        <dbReference type="Rhea" id="RHEA:18585"/>
        <dbReference type="ChEBI" id="CHEBI:57642"/>
        <dbReference type="ChEBI" id="CHEBI:59776"/>
        <dbReference type="EC" id="5.3.1.1"/>
    </reaction>
</comment>
<comment type="pathway">
    <text evidence="1">Carbohydrate biosynthesis; gluconeogenesis.</text>
</comment>
<comment type="pathway">
    <text evidence="1">Carbohydrate degradation; glycolysis; D-glyceraldehyde 3-phosphate from glycerone phosphate: step 1/1.</text>
</comment>
<comment type="subunit">
    <text evidence="1">Homodimer.</text>
</comment>
<comment type="subcellular location">
    <subcellularLocation>
        <location evidence="1">Cytoplasm</location>
    </subcellularLocation>
</comment>
<comment type="similarity">
    <text evidence="1">Belongs to the triosephosphate isomerase family.</text>
</comment>
<keyword id="KW-0963">Cytoplasm</keyword>
<keyword id="KW-0312">Gluconeogenesis</keyword>
<keyword id="KW-0324">Glycolysis</keyword>
<keyword id="KW-0413">Isomerase</keyword>
<accession>Q0I591</accession>
<protein>
    <recommendedName>
        <fullName evidence="1">Triosephosphate isomerase</fullName>
        <shortName evidence="1">TIM</shortName>
        <shortName evidence="1">TPI</shortName>
        <ecNumber evidence="1">5.3.1.1</ecNumber>
    </recommendedName>
    <alternativeName>
        <fullName evidence="1">Triose-phosphate isomerase</fullName>
    </alternativeName>
</protein>
<feature type="chain" id="PRO_0000307476" description="Triosephosphate isomerase">
    <location>
        <begin position="1"/>
        <end position="255"/>
    </location>
</feature>
<feature type="active site" description="Electrophile" evidence="1">
    <location>
        <position position="96"/>
    </location>
</feature>
<feature type="active site" description="Proton acceptor" evidence="1">
    <location>
        <position position="168"/>
    </location>
</feature>
<feature type="binding site" evidence="1">
    <location>
        <begin position="10"/>
        <end position="12"/>
    </location>
    <ligand>
        <name>substrate</name>
    </ligand>
</feature>
<feature type="binding site" evidence="1">
    <location>
        <position position="174"/>
    </location>
    <ligand>
        <name>substrate</name>
    </ligand>
</feature>
<feature type="binding site" evidence="1">
    <location>
        <position position="213"/>
    </location>
    <ligand>
        <name>substrate</name>
    </ligand>
</feature>
<feature type="binding site" evidence="1">
    <location>
        <begin position="234"/>
        <end position="235"/>
    </location>
    <ligand>
        <name>substrate</name>
    </ligand>
</feature>
<reference key="1">
    <citation type="journal article" date="2007" name="J. Bacteriol.">
        <title>Complete genome sequence of Haemophilus somnus (Histophilus somni) strain 129Pt and comparison to Haemophilus ducreyi 35000HP and Haemophilus influenzae Rd.</title>
        <authorList>
            <person name="Challacombe J.F."/>
            <person name="Duncan A.J."/>
            <person name="Brettin T.S."/>
            <person name="Bruce D."/>
            <person name="Chertkov O."/>
            <person name="Detter J.C."/>
            <person name="Han C.S."/>
            <person name="Misra M."/>
            <person name="Richardson P."/>
            <person name="Tapia R."/>
            <person name="Thayer N."/>
            <person name="Xie G."/>
            <person name="Inzana T.J."/>
        </authorList>
    </citation>
    <scope>NUCLEOTIDE SEQUENCE [LARGE SCALE GENOMIC DNA]</scope>
    <source>
        <strain>129Pt</strain>
    </source>
</reference>
<dbReference type="EC" id="5.3.1.1" evidence="1"/>
<dbReference type="EMBL" id="CP000436">
    <property type="protein sequence ID" value="ABI25859.1"/>
    <property type="molecule type" value="Genomic_DNA"/>
</dbReference>
<dbReference type="SMR" id="Q0I591"/>
<dbReference type="KEGG" id="hso:HS_1591"/>
<dbReference type="eggNOG" id="COG0149">
    <property type="taxonomic scope" value="Bacteria"/>
</dbReference>
<dbReference type="HOGENOM" id="CLU_024251_2_1_6"/>
<dbReference type="UniPathway" id="UPA00109">
    <property type="reaction ID" value="UER00189"/>
</dbReference>
<dbReference type="UniPathway" id="UPA00138"/>
<dbReference type="GO" id="GO:0005829">
    <property type="term" value="C:cytosol"/>
    <property type="evidence" value="ECO:0007669"/>
    <property type="project" value="TreeGrafter"/>
</dbReference>
<dbReference type="GO" id="GO:0004807">
    <property type="term" value="F:triose-phosphate isomerase activity"/>
    <property type="evidence" value="ECO:0007669"/>
    <property type="project" value="UniProtKB-UniRule"/>
</dbReference>
<dbReference type="GO" id="GO:0006094">
    <property type="term" value="P:gluconeogenesis"/>
    <property type="evidence" value="ECO:0007669"/>
    <property type="project" value="UniProtKB-UniRule"/>
</dbReference>
<dbReference type="GO" id="GO:0046166">
    <property type="term" value="P:glyceraldehyde-3-phosphate biosynthetic process"/>
    <property type="evidence" value="ECO:0007669"/>
    <property type="project" value="TreeGrafter"/>
</dbReference>
<dbReference type="GO" id="GO:0019563">
    <property type="term" value="P:glycerol catabolic process"/>
    <property type="evidence" value="ECO:0007669"/>
    <property type="project" value="TreeGrafter"/>
</dbReference>
<dbReference type="GO" id="GO:0006096">
    <property type="term" value="P:glycolytic process"/>
    <property type="evidence" value="ECO:0007669"/>
    <property type="project" value="UniProtKB-UniRule"/>
</dbReference>
<dbReference type="CDD" id="cd00311">
    <property type="entry name" value="TIM"/>
    <property type="match status" value="1"/>
</dbReference>
<dbReference type="FunFam" id="3.20.20.70:FF:000020">
    <property type="entry name" value="Triosephosphate isomerase"/>
    <property type="match status" value="1"/>
</dbReference>
<dbReference type="Gene3D" id="3.20.20.70">
    <property type="entry name" value="Aldolase class I"/>
    <property type="match status" value="1"/>
</dbReference>
<dbReference type="HAMAP" id="MF_00147_B">
    <property type="entry name" value="TIM_B"/>
    <property type="match status" value="1"/>
</dbReference>
<dbReference type="InterPro" id="IPR013785">
    <property type="entry name" value="Aldolase_TIM"/>
</dbReference>
<dbReference type="InterPro" id="IPR035990">
    <property type="entry name" value="TIM_sf"/>
</dbReference>
<dbReference type="InterPro" id="IPR022896">
    <property type="entry name" value="TrioseP_Isoase_bac/euk"/>
</dbReference>
<dbReference type="InterPro" id="IPR000652">
    <property type="entry name" value="Triosephosphate_isomerase"/>
</dbReference>
<dbReference type="InterPro" id="IPR020861">
    <property type="entry name" value="Triosephosphate_isomerase_AS"/>
</dbReference>
<dbReference type="NCBIfam" id="TIGR00419">
    <property type="entry name" value="tim"/>
    <property type="match status" value="1"/>
</dbReference>
<dbReference type="PANTHER" id="PTHR21139">
    <property type="entry name" value="TRIOSEPHOSPHATE ISOMERASE"/>
    <property type="match status" value="1"/>
</dbReference>
<dbReference type="PANTHER" id="PTHR21139:SF42">
    <property type="entry name" value="TRIOSEPHOSPHATE ISOMERASE"/>
    <property type="match status" value="1"/>
</dbReference>
<dbReference type="Pfam" id="PF00121">
    <property type="entry name" value="TIM"/>
    <property type="match status" value="1"/>
</dbReference>
<dbReference type="SUPFAM" id="SSF51351">
    <property type="entry name" value="Triosephosphate isomerase (TIM)"/>
    <property type="match status" value="1"/>
</dbReference>
<dbReference type="PROSITE" id="PS00171">
    <property type="entry name" value="TIM_1"/>
    <property type="match status" value="1"/>
</dbReference>
<dbReference type="PROSITE" id="PS51440">
    <property type="entry name" value="TIM_2"/>
    <property type="match status" value="1"/>
</dbReference>
<sequence length="255" mass="26917">MARRPLVMGNWKLNGSKAFTKELITGLKDELNAVSGCDVAIAPPVMYLAEAETALVSSDIALGTQNVDLNKQGAFTGDISTEMLKDFGVKYVIIGHSERRQYHHESDEFIAKKFGVLKDAGLVPVLCIGESEAENEAGKTEEVCARQIDAVMNTLGVEAFNGAVIAYEPIWAIGTGKSATPAQAQAVHAFIRGHIAKQSQAVAERVIIQYGGSVNDANAAELFTQPDIDGALVGGASLKASAFAVIVKAAAKAKN</sequence>
<proteinExistence type="inferred from homology"/>
<evidence type="ECO:0000255" key="1">
    <source>
        <dbReference type="HAMAP-Rule" id="MF_00147"/>
    </source>
</evidence>
<name>TPIS_HISS1</name>
<organism>
    <name type="scientific">Histophilus somni (strain 129Pt)</name>
    <name type="common">Haemophilus somnus</name>
    <dbReference type="NCBI Taxonomy" id="205914"/>
    <lineage>
        <taxon>Bacteria</taxon>
        <taxon>Pseudomonadati</taxon>
        <taxon>Pseudomonadota</taxon>
        <taxon>Gammaproteobacteria</taxon>
        <taxon>Pasteurellales</taxon>
        <taxon>Pasteurellaceae</taxon>
        <taxon>Histophilus</taxon>
    </lineage>
</organism>
<gene>
    <name evidence="1" type="primary">tpiA</name>
    <name type="ordered locus">HS_1591</name>
</gene>